<sequence length="63" mass="7183">MKANELREKSVEELNTELLGLLREQFNLRMQAASGQLQQTHLVKQVRHNIARVKTLLTEKAGA</sequence>
<evidence type="ECO:0000255" key="1">
    <source>
        <dbReference type="HAMAP-Rule" id="MF_00374"/>
    </source>
</evidence>
<evidence type="ECO:0000305" key="2"/>
<keyword id="KW-0687">Ribonucleoprotein</keyword>
<keyword id="KW-0689">Ribosomal protein</keyword>
<protein>
    <recommendedName>
        <fullName evidence="1">Large ribosomal subunit protein uL29</fullName>
    </recommendedName>
    <alternativeName>
        <fullName evidence="2">50S ribosomal protein L29</fullName>
    </alternativeName>
</protein>
<dbReference type="EMBL" id="CP001657">
    <property type="protein sequence ID" value="ACT14829.1"/>
    <property type="molecule type" value="Genomic_DNA"/>
</dbReference>
<dbReference type="RefSeq" id="WP_005970272.1">
    <property type="nucleotide sequence ID" value="NC_012917.1"/>
</dbReference>
<dbReference type="SMR" id="C6DG66"/>
<dbReference type="STRING" id="561230.PC1_3814"/>
<dbReference type="GeneID" id="93391972"/>
<dbReference type="KEGG" id="pct:PC1_3814"/>
<dbReference type="eggNOG" id="COG0255">
    <property type="taxonomic scope" value="Bacteria"/>
</dbReference>
<dbReference type="HOGENOM" id="CLU_158491_1_2_6"/>
<dbReference type="OrthoDB" id="9815192at2"/>
<dbReference type="Proteomes" id="UP000002736">
    <property type="component" value="Chromosome"/>
</dbReference>
<dbReference type="GO" id="GO:0022625">
    <property type="term" value="C:cytosolic large ribosomal subunit"/>
    <property type="evidence" value="ECO:0007669"/>
    <property type="project" value="TreeGrafter"/>
</dbReference>
<dbReference type="GO" id="GO:0003735">
    <property type="term" value="F:structural constituent of ribosome"/>
    <property type="evidence" value="ECO:0007669"/>
    <property type="project" value="InterPro"/>
</dbReference>
<dbReference type="GO" id="GO:0006412">
    <property type="term" value="P:translation"/>
    <property type="evidence" value="ECO:0007669"/>
    <property type="project" value="UniProtKB-UniRule"/>
</dbReference>
<dbReference type="CDD" id="cd00427">
    <property type="entry name" value="Ribosomal_L29_HIP"/>
    <property type="match status" value="1"/>
</dbReference>
<dbReference type="FunFam" id="1.10.287.310:FF:000001">
    <property type="entry name" value="50S ribosomal protein L29"/>
    <property type="match status" value="1"/>
</dbReference>
<dbReference type="Gene3D" id="1.10.287.310">
    <property type="match status" value="1"/>
</dbReference>
<dbReference type="HAMAP" id="MF_00374">
    <property type="entry name" value="Ribosomal_uL29"/>
    <property type="match status" value="1"/>
</dbReference>
<dbReference type="InterPro" id="IPR050063">
    <property type="entry name" value="Ribosomal_protein_uL29"/>
</dbReference>
<dbReference type="InterPro" id="IPR001854">
    <property type="entry name" value="Ribosomal_uL29"/>
</dbReference>
<dbReference type="InterPro" id="IPR018254">
    <property type="entry name" value="Ribosomal_uL29_CS"/>
</dbReference>
<dbReference type="InterPro" id="IPR036049">
    <property type="entry name" value="Ribosomal_uL29_sf"/>
</dbReference>
<dbReference type="NCBIfam" id="TIGR00012">
    <property type="entry name" value="L29"/>
    <property type="match status" value="1"/>
</dbReference>
<dbReference type="PANTHER" id="PTHR10916">
    <property type="entry name" value="60S RIBOSOMAL PROTEIN L35/50S RIBOSOMAL PROTEIN L29"/>
    <property type="match status" value="1"/>
</dbReference>
<dbReference type="PANTHER" id="PTHR10916:SF0">
    <property type="entry name" value="LARGE RIBOSOMAL SUBUNIT PROTEIN UL29C"/>
    <property type="match status" value="1"/>
</dbReference>
<dbReference type="Pfam" id="PF00831">
    <property type="entry name" value="Ribosomal_L29"/>
    <property type="match status" value="1"/>
</dbReference>
<dbReference type="SUPFAM" id="SSF46561">
    <property type="entry name" value="Ribosomal protein L29 (L29p)"/>
    <property type="match status" value="1"/>
</dbReference>
<dbReference type="PROSITE" id="PS00579">
    <property type="entry name" value="RIBOSOMAL_L29"/>
    <property type="match status" value="1"/>
</dbReference>
<reference key="1">
    <citation type="submission" date="2009-07" db="EMBL/GenBank/DDBJ databases">
        <title>Complete sequence of Pectobacterium carotovorum subsp. carotovorum PC1.</title>
        <authorList>
            <consortium name="US DOE Joint Genome Institute"/>
            <person name="Lucas S."/>
            <person name="Copeland A."/>
            <person name="Lapidus A."/>
            <person name="Glavina del Rio T."/>
            <person name="Tice H."/>
            <person name="Bruce D."/>
            <person name="Goodwin L."/>
            <person name="Pitluck S."/>
            <person name="Munk A.C."/>
            <person name="Brettin T."/>
            <person name="Detter J.C."/>
            <person name="Han C."/>
            <person name="Tapia R."/>
            <person name="Larimer F."/>
            <person name="Land M."/>
            <person name="Hauser L."/>
            <person name="Kyrpides N."/>
            <person name="Mikhailova N."/>
            <person name="Balakrishnan V."/>
            <person name="Glasner J."/>
            <person name="Perna N.T."/>
        </authorList>
    </citation>
    <scope>NUCLEOTIDE SEQUENCE [LARGE SCALE GENOMIC DNA]</scope>
    <source>
        <strain>PC1</strain>
    </source>
</reference>
<gene>
    <name evidence="1" type="primary">rpmC</name>
    <name type="ordered locus">PC1_3814</name>
</gene>
<accession>C6DG66</accession>
<organism>
    <name type="scientific">Pectobacterium carotovorum subsp. carotovorum (strain PC1)</name>
    <dbReference type="NCBI Taxonomy" id="561230"/>
    <lineage>
        <taxon>Bacteria</taxon>
        <taxon>Pseudomonadati</taxon>
        <taxon>Pseudomonadota</taxon>
        <taxon>Gammaproteobacteria</taxon>
        <taxon>Enterobacterales</taxon>
        <taxon>Pectobacteriaceae</taxon>
        <taxon>Pectobacterium</taxon>
    </lineage>
</organism>
<comment type="similarity">
    <text evidence="1">Belongs to the universal ribosomal protein uL29 family.</text>
</comment>
<proteinExistence type="inferred from homology"/>
<feature type="chain" id="PRO_1000205633" description="Large ribosomal subunit protein uL29">
    <location>
        <begin position="1"/>
        <end position="63"/>
    </location>
</feature>
<name>RL29_PECCP</name>